<name>TIG_MYCUA</name>
<protein>
    <recommendedName>
        <fullName evidence="1">Trigger factor</fullName>
        <shortName evidence="1">TF</shortName>
        <ecNumber evidence="1">5.2.1.8</ecNumber>
    </recommendedName>
    <alternativeName>
        <fullName evidence="1">PPIase</fullName>
    </alternativeName>
</protein>
<evidence type="ECO:0000255" key="1">
    <source>
        <dbReference type="HAMAP-Rule" id="MF_00303"/>
    </source>
</evidence>
<evidence type="ECO:0000256" key="2">
    <source>
        <dbReference type="SAM" id="MobiDB-lite"/>
    </source>
</evidence>
<reference key="1">
    <citation type="journal article" date="2007" name="Genome Res.">
        <title>Reductive evolution and niche adaptation inferred from the genome of Mycobacterium ulcerans, the causative agent of Buruli ulcer.</title>
        <authorList>
            <person name="Stinear T.P."/>
            <person name="Seemann T."/>
            <person name="Pidot S."/>
            <person name="Frigui W."/>
            <person name="Reysset G."/>
            <person name="Garnier T."/>
            <person name="Meurice G."/>
            <person name="Simon D."/>
            <person name="Bouchier C."/>
            <person name="Ma L."/>
            <person name="Tichit M."/>
            <person name="Porter J.L."/>
            <person name="Ryan J."/>
            <person name="Johnson P.D.R."/>
            <person name="Davies J.K."/>
            <person name="Jenkin G.A."/>
            <person name="Small P.L.C."/>
            <person name="Jones L.M."/>
            <person name="Tekaia F."/>
            <person name="Laval F."/>
            <person name="Daffe M."/>
            <person name="Parkhill J."/>
            <person name="Cole S.T."/>
        </authorList>
    </citation>
    <scope>NUCLEOTIDE SEQUENCE [LARGE SCALE GENOMIC DNA]</scope>
    <source>
        <strain>Agy99</strain>
    </source>
</reference>
<feature type="chain" id="PRO_1000022716" description="Trigger factor">
    <location>
        <begin position="1"/>
        <end position="484"/>
    </location>
</feature>
<feature type="domain" description="PPIase FKBP-type" evidence="1">
    <location>
        <begin position="162"/>
        <end position="243"/>
    </location>
</feature>
<feature type="region of interest" description="Disordered" evidence="2">
    <location>
        <begin position="427"/>
        <end position="484"/>
    </location>
</feature>
<feature type="compositionally biased region" description="Acidic residues" evidence="2">
    <location>
        <begin position="444"/>
        <end position="476"/>
    </location>
</feature>
<organism>
    <name type="scientific">Mycobacterium ulcerans (strain Agy99)</name>
    <dbReference type="NCBI Taxonomy" id="362242"/>
    <lineage>
        <taxon>Bacteria</taxon>
        <taxon>Bacillati</taxon>
        <taxon>Actinomycetota</taxon>
        <taxon>Actinomycetes</taxon>
        <taxon>Mycobacteriales</taxon>
        <taxon>Mycobacteriaceae</taxon>
        <taxon>Mycobacterium</taxon>
        <taxon>Mycobacterium ulcerans group</taxon>
    </lineage>
</organism>
<keyword id="KW-0131">Cell cycle</keyword>
<keyword id="KW-0132">Cell division</keyword>
<keyword id="KW-0143">Chaperone</keyword>
<keyword id="KW-0963">Cytoplasm</keyword>
<keyword id="KW-0413">Isomerase</keyword>
<keyword id="KW-0697">Rotamase</keyword>
<accession>A0PU35</accession>
<sequence>MKSSVEQLSPTRVRIKVEVPFAELEPDFQRAYKELAKQVRLPGFRPGRAPVKLLEARFGREAMLDQIVNDAVPSRYGQALAESEIQPLGRPDIEVTQKEYGQDLAFTAEVDVRPEIALPDLTGLSVSVDAIEATDDEVNAELESLRARFGTLTGVERPVATGDFISIDLSAAVDGEDVPNAAAEGLSHEVRSGRLIAGLDDAVVGLSVDESRVFTAKLAAGDHAGRDAEVTVTVKSVKERELPEPDDEFAQLASEFDTIDELRASLREQVLQAKRVGQAEQIRNATIDALLERVDVPTPESYVQAQYEGVLHSALSGINNDEARFNELLVEQGSSRDAFDAEARTASEKDVKRQLLLDALADDLKVQVGQEDLTERLVLTSRQYGIEPQQLFVYLQENNQLPSMFADVRRELAVKAVAQAATVTDTDGNTIDTSEFFGKPPENDVTDLLDDDADGDAGVDADGDTENSAEPADADSADTAQGAG</sequence>
<gene>
    <name evidence="1" type="primary">tig</name>
    <name type="ordered locus">MUL_3732</name>
</gene>
<dbReference type="EC" id="5.2.1.8" evidence="1"/>
<dbReference type="EMBL" id="CP000325">
    <property type="protein sequence ID" value="ABL05854.1"/>
    <property type="molecule type" value="Genomic_DNA"/>
</dbReference>
<dbReference type="RefSeq" id="WP_011741459.1">
    <property type="nucleotide sequence ID" value="NC_008611.1"/>
</dbReference>
<dbReference type="SMR" id="A0PU35"/>
<dbReference type="KEGG" id="mul:MUL_3732"/>
<dbReference type="eggNOG" id="COG0544">
    <property type="taxonomic scope" value="Bacteria"/>
</dbReference>
<dbReference type="HOGENOM" id="CLU_033058_3_0_11"/>
<dbReference type="Proteomes" id="UP000000765">
    <property type="component" value="Chromosome"/>
</dbReference>
<dbReference type="GO" id="GO:0005737">
    <property type="term" value="C:cytoplasm"/>
    <property type="evidence" value="ECO:0007669"/>
    <property type="project" value="UniProtKB-SubCell"/>
</dbReference>
<dbReference type="GO" id="GO:0003755">
    <property type="term" value="F:peptidyl-prolyl cis-trans isomerase activity"/>
    <property type="evidence" value="ECO:0007669"/>
    <property type="project" value="UniProtKB-UniRule"/>
</dbReference>
<dbReference type="GO" id="GO:0044183">
    <property type="term" value="F:protein folding chaperone"/>
    <property type="evidence" value="ECO:0007669"/>
    <property type="project" value="TreeGrafter"/>
</dbReference>
<dbReference type="GO" id="GO:0043022">
    <property type="term" value="F:ribosome binding"/>
    <property type="evidence" value="ECO:0007669"/>
    <property type="project" value="TreeGrafter"/>
</dbReference>
<dbReference type="GO" id="GO:0051083">
    <property type="term" value="P:'de novo' cotranslational protein folding"/>
    <property type="evidence" value="ECO:0007669"/>
    <property type="project" value="TreeGrafter"/>
</dbReference>
<dbReference type="GO" id="GO:0051301">
    <property type="term" value="P:cell division"/>
    <property type="evidence" value="ECO:0007669"/>
    <property type="project" value="UniProtKB-KW"/>
</dbReference>
<dbReference type="GO" id="GO:0061077">
    <property type="term" value="P:chaperone-mediated protein folding"/>
    <property type="evidence" value="ECO:0007669"/>
    <property type="project" value="TreeGrafter"/>
</dbReference>
<dbReference type="GO" id="GO:0015031">
    <property type="term" value="P:protein transport"/>
    <property type="evidence" value="ECO:0007669"/>
    <property type="project" value="UniProtKB-UniRule"/>
</dbReference>
<dbReference type="GO" id="GO:0043335">
    <property type="term" value="P:protein unfolding"/>
    <property type="evidence" value="ECO:0007669"/>
    <property type="project" value="TreeGrafter"/>
</dbReference>
<dbReference type="FunFam" id="3.10.50.40:FF:000019">
    <property type="entry name" value="Trigger factor"/>
    <property type="match status" value="1"/>
</dbReference>
<dbReference type="Gene3D" id="3.10.50.40">
    <property type="match status" value="1"/>
</dbReference>
<dbReference type="Gene3D" id="3.30.70.1050">
    <property type="entry name" value="Trigger factor ribosome-binding domain"/>
    <property type="match status" value="1"/>
</dbReference>
<dbReference type="Gene3D" id="1.10.3120.10">
    <property type="entry name" value="Trigger factor, C-terminal domain"/>
    <property type="match status" value="1"/>
</dbReference>
<dbReference type="HAMAP" id="MF_00303">
    <property type="entry name" value="Trigger_factor_Tig"/>
    <property type="match status" value="1"/>
</dbReference>
<dbReference type="InterPro" id="IPR046357">
    <property type="entry name" value="PPIase_dom_sf"/>
</dbReference>
<dbReference type="InterPro" id="IPR005215">
    <property type="entry name" value="Trig_fac"/>
</dbReference>
<dbReference type="InterPro" id="IPR008880">
    <property type="entry name" value="Trigger_fac_C"/>
</dbReference>
<dbReference type="InterPro" id="IPR037041">
    <property type="entry name" value="Trigger_fac_C_sf"/>
</dbReference>
<dbReference type="InterPro" id="IPR008881">
    <property type="entry name" value="Trigger_fac_ribosome-bd_bac"/>
</dbReference>
<dbReference type="InterPro" id="IPR036611">
    <property type="entry name" value="Trigger_fac_ribosome-bd_sf"/>
</dbReference>
<dbReference type="InterPro" id="IPR027304">
    <property type="entry name" value="Trigger_fact/SurA_dom_sf"/>
</dbReference>
<dbReference type="NCBIfam" id="TIGR00115">
    <property type="entry name" value="tig"/>
    <property type="match status" value="1"/>
</dbReference>
<dbReference type="PANTHER" id="PTHR30560">
    <property type="entry name" value="TRIGGER FACTOR CHAPERONE AND PEPTIDYL-PROLYL CIS/TRANS ISOMERASE"/>
    <property type="match status" value="1"/>
</dbReference>
<dbReference type="PANTHER" id="PTHR30560:SF3">
    <property type="entry name" value="TRIGGER FACTOR-LIKE PROTEIN TIG, CHLOROPLASTIC"/>
    <property type="match status" value="1"/>
</dbReference>
<dbReference type="Pfam" id="PF05698">
    <property type="entry name" value="Trigger_C"/>
    <property type="match status" value="1"/>
</dbReference>
<dbReference type="Pfam" id="PF05697">
    <property type="entry name" value="Trigger_N"/>
    <property type="match status" value="1"/>
</dbReference>
<dbReference type="PIRSF" id="PIRSF003095">
    <property type="entry name" value="Trigger_factor"/>
    <property type="match status" value="1"/>
</dbReference>
<dbReference type="SUPFAM" id="SSF54534">
    <property type="entry name" value="FKBP-like"/>
    <property type="match status" value="1"/>
</dbReference>
<dbReference type="SUPFAM" id="SSF109998">
    <property type="entry name" value="Triger factor/SurA peptide-binding domain-like"/>
    <property type="match status" value="1"/>
</dbReference>
<dbReference type="SUPFAM" id="SSF102735">
    <property type="entry name" value="Trigger factor ribosome-binding domain"/>
    <property type="match status" value="1"/>
</dbReference>
<proteinExistence type="inferred from homology"/>
<comment type="function">
    <text evidence="1">Involved in protein export. Acts as a chaperone by maintaining the newly synthesized protein in an open conformation. Functions as a peptidyl-prolyl cis-trans isomerase.</text>
</comment>
<comment type="catalytic activity">
    <reaction evidence="1">
        <text>[protein]-peptidylproline (omega=180) = [protein]-peptidylproline (omega=0)</text>
        <dbReference type="Rhea" id="RHEA:16237"/>
        <dbReference type="Rhea" id="RHEA-COMP:10747"/>
        <dbReference type="Rhea" id="RHEA-COMP:10748"/>
        <dbReference type="ChEBI" id="CHEBI:83833"/>
        <dbReference type="ChEBI" id="CHEBI:83834"/>
        <dbReference type="EC" id="5.2.1.8"/>
    </reaction>
</comment>
<comment type="subcellular location">
    <subcellularLocation>
        <location>Cytoplasm</location>
    </subcellularLocation>
    <text evidence="1">About half TF is bound to the ribosome near the polypeptide exit tunnel while the other half is free in the cytoplasm.</text>
</comment>
<comment type="domain">
    <text evidence="1">Consists of 3 domains; the N-terminus binds the ribosome, the middle domain has PPIase activity, while the C-terminus has intrinsic chaperone activity on its own.</text>
</comment>
<comment type="similarity">
    <text evidence="1">Belongs to the FKBP-type PPIase family. Tig subfamily.</text>
</comment>